<evidence type="ECO:0000255" key="1">
    <source>
        <dbReference type="HAMAP-Rule" id="MF_00176"/>
    </source>
</evidence>
<comment type="function">
    <text evidence="1">Catalyzes the attachment of serine to tRNA(Ser). Is also able to aminoacylate tRNA(Sec) with serine, to form the misacylated tRNA L-seryl-tRNA(Sec), which will be further converted into selenocysteinyl-tRNA(Sec).</text>
</comment>
<comment type="catalytic activity">
    <reaction evidence="1">
        <text>tRNA(Ser) + L-serine + ATP = L-seryl-tRNA(Ser) + AMP + diphosphate + H(+)</text>
        <dbReference type="Rhea" id="RHEA:12292"/>
        <dbReference type="Rhea" id="RHEA-COMP:9669"/>
        <dbReference type="Rhea" id="RHEA-COMP:9703"/>
        <dbReference type="ChEBI" id="CHEBI:15378"/>
        <dbReference type="ChEBI" id="CHEBI:30616"/>
        <dbReference type="ChEBI" id="CHEBI:33019"/>
        <dbReference type="ChEBI" id="CHEBI:33384"/>
        <dbReference type="ChEBI" id="CHEBI:78442"/>
        <dbReference type="ChEBI" id="CHEBI:78533"/>
        <dbReference type="ChEBI" id="CHEBI:456215"/>
        <dbReference type="EC" id="6.1.1.11"/>
    </reaction>
</comment>
<comment type="catalytic activity">
    <reaction evidence="1">
        <text>tRNA(Sec) + L-serine + ATP = L-seryl-tRNA(Sec) + AMP + diphosphate + H(+)</text>
        <dbReference type="Rhea" id="RHEA:42580"/>
        <dbReference type="Rhea" id="RHEA-COMP:9742"/>
        <dbReference type="Rhea" id="RHEA-COMP:10128"/>
        <dbReference type="ChEBI" id="CHEBI:15378"/>
        <dbReference type="ChEBI" id="CHEBI:30616"/>
        <dbReference type="ChEBI" id="CHEBI:33019"/>
        <dbReference type="ChEBI" id="CHEBI:33384"/>
        <dbReference type="ChEBI" id="CHEBI:78442"/>
        <dbReference type="ChEBI" id="CHEBI:78533"/>
        <dbReference type="ChEBI" id="CHEBI:456215"/>
        <dbReference type="EC" id="6.1.1.11"/>
    </reaction>
</comment>
<comment type="pathway">
    <text evidence="1">Aminoacyl-tRNA biosynthesis; selenocysteinyl-tRNA(Sec) biosynthesis; L-seryl-tRNA(Sec) from L-serine and tRNA(Sec): step 1/1.</text>
</comment>
<comment type="subunit">
    <text evidence="1">Homodimer. The tRNA molecule binds across the dimer.</text>
</comment>
<comment type="subcellular location">
    <subcellularLocation>
        <location evidence="1">Cytoplasm</location>
    </subcellularLocation>
</comment>
<comment type="domain">
    <text evidence="1">Consists of two distinct domains, a catalytic core and a N-terminal extension that is involved in tRNA binding.</text>
</comment>
<comment type="similarity">
    <text evidence="1">Belongs to the class-II aminoacyl-tRNA synthetase family. Type-1 seryl-tRNA synthetase subfamily.</text>
</comment>
<keyword id="KW-0030">Aminoacyl-tRNA synthetase</keyword>
<keyword id="KW-0067">ATP-binding</keyword>
<keyword id="KW-0963">Cytoplasm</keyword>
<keyword id="KW-0436">Ligase</keyword>
<keyword id="KW-0547">Nucleotide-binding</keyword>
<keyword id="KW-0648">Protein biosynthesis</keyword>
<keyword id="KW-1185">Reference proteome</keyword>
<proteinExistence type="inferred from homology"/>
<gene>
    <name evidence="1" type="primary">serS</name>
    <name type="ordered locus">Xaut_4404</name>
</gene>
<feature type="chain" id="PRO_1000098147" description="Serine--tRNA ligase">
    <location>
        <begin position="1"/>
        <end position="468"/>
    </location>
</feature>
<feature type="binding site" evidence="1">
    <location>
        <begin position="272"/>
        <end position="274"/>
    </location>
    <ligand>
        <name>L-serine</name>
        <dbReference type="ChEBI" id="CHEBI:33384"/>
    </ligand>
</feature>
<feature type="binding site" evidence="1">
    <location>
        <begin position="303"/>
        <end position="305"/>
    </location>
    <ligand>
        <name>ATP</name>
        <dbReference type="ChEBI" id="CHEBI:30616"/>
    </ligand>
</feature>
<feature type="binding site" evidence="1">
    <location>
        <position position="326"/>
    </location>
    <ligand>
        <name>L-serine</name>
        <dbReference type="ChEBI" id="CHEBI:33384"/>
    </ligand>
</feature>
<feature type="binding site" evidence="1">
    <location>
        <begin position="390"/>
        <end position="393"/>
    </location>
    <ligand>
        <name>ATP</name>
        <dbReference type="ChEBI" id="CHEBI:30616"/>
    </ligand>
</feature>
<feature type="binding site" evidence="1">
    <location>
        <position position="426"/>
    </location>
    <ligand>
        <name>L-serine</name>
        <dbReference type="ChEBI" id="CHEBI:33384"/>
    </ligand>
</feature>
<sequence length="468" mass="51599">MHDIKWIRDEPVGLITALVRRGGGSDEAKSAAEKLVAYLIGLDEQRRRTLTDLEGKLARRNAASKEIGQAKAQKDEERASRLMAEVANLKADIPTLEALAKDWEKSLDNALAAIPNAPLAEVPPGADEHDNVEKSRFGVARSYAFTPKQHFEVGEALGQMDFETAAKLSGARFVVNKGPLARLERALGQFFLDVHTGEHGYMEVNPPLLVRDDAMFGTAQLPKFREDQFFVNTVDGIEAISAETKGFETFSDEFKSKLTEAMSYQGRWLIPTAEVPLTNLVRESILSEEELPLRLTACTPCFRAEAGAAGRDTRGMIRQHQFTKVELVSITTPEKSAEEHERMLACAEAVLKKLDLHYRVVTLCTGDMGFASQKTYDIEVWLPGQGAFREISSCSVCGDFQARRMNARYRPAEGKGPRFVHTLNGSGVAVGRALVAVLETYQQENGAVTVPDALLPYMGGLKTIEKLK</sequence>
<accession>A7INN1</accession>
<reference key="1">
    <citation type="submission" date="2007-07" db="EMBL/GenBank/DDBJ databases">
        <title>Complete sequence of chromosome of Xanthobacter autotrophicus Py2.</title>
        <authorList>
            <consortium name="US DOE Joint Genome Institute"/>
            <person name="Copeland A."/>
            <person name="Lucas S."/>
            <person name="Lapidus A."/>
            <person name="Barry K."/>
            <person name="Glavina del Rio T."/>
            <person name="Hammon N."/>
            <person name="Israni S."/>
            <person name="Dalin E."/>
            <person name="Tice H."/>
            <person name="Pitluck S."/>
            <person name="Sims D."/>
            <person name="Brettin T."/>
            <person name="Bruce D."/>
            <person name="Detter J.C."/>
            <person name="Han C."/>
            <person name="Tapia R."/>
            <person name="Brainard J."/>
            <person name="Schmutz J."/>
            <person name="Larimer F."/>
            <person name="Land M."/>
            <person name="Hauser L."/>
            <person name="Kyrpides N."/>
            <person name="Kim E."/>
            <person name="Ensigns S.A."/>
            <person name="Richardson P."/>
        </authorList>
    </citation>
    <scope>NUCLEOTIDE SEQUENCE [LARGE SCALE GENOMIC DNA]</scope>
    <source>
        <strain>ATCC BAA-1158 / Py2</strain>
    </source>
</reference>
<name>SYS_XANP2</name>
<protein>
    <recommendedName>
        <fullName evidence="1">Serine--tRNA ligase</fullName>
        <ecNumber evidence="1">6.1.1.11</ecNumber>
    </recommendedName>
    <alternativeName>
        <fullName evidence="1">Seryl-tRNA synthetase</fullName>
        <shortName evidence="1">SerRS</shortName>
    </alternativeName>
    <alternativeName>
        <fullName evidence="1">Seryl-tRNA(Ser/Sec) synthetase</fullName>
    </alternativeName>
</protein>
<dbReference type="EC" id="6.1.1.11" evidence="1"/>
<dbReference type="EMBL" id="CP000781">
    <property type="protein sequence ID" value="ABS69625.1"/>
    <property type="molecule type" value="Genomic_DNA"/>
</dbReference>
<dbReference type="SMR" id="A7INN1"/>
<dbReference type="STRING" id="78245.Xaut_4404"/>
<dbReference type="KEGG" id="xau:Xaut_4404"/>
<dbReference type="eggNOG" id="COG0172">
    <property type="taxonomic scope" value="Bacteria"/>
</dbReference>
<dbReference type="HOGENOM" id="CLU_023797_0_1_5"/>
<dbReference type="OrthoDB" id="9804647at2"/>
<dbReference type="PhylomeDB" id="A7INN1"/>
<dbReference type="UniPathway" id="UPA00906">
    <property type="reaction ID" value="UER00895"/>
</dbReference>
<dbReference type="Proteomes" id="UP000002417">
    <property type="component" value="Chromosome"/>
</dbReference>
<dbReference type="GO" id="GO:0005737">
    <property type="term" value="C:cytoplasm"/>
    <property type="evidence" value="ECO:0007669"/>
    <property type="project" value="UniProtKB-SubCell"/>
</dbReference>
<dbReference type="GO" id="GO:0005524">
    <property type="term" value="F:ATP binding"/>
    <property type="evidence" value="ECO:0007669"/>
    <property type="project" value="UniProtKB-UniRule"/>
</dbReference>
<dbReference type="GO" id="GO:0004828">
    <property type="term" value="F:serine-tRNA ligase activity"/>
    <property type="evidence" value="ECO:0007669"/>
    <property type="project" value="UniProtKB-UniRule"/>
</dbReference>
<dbReference type="GO" id="GO:0016260">
    <property type="term" value="P:selenocysteine biosynthetic process"/>
    <property type="evidence" value="ECO:0007669"/>
    <property type="project" value="UniProtKB-UniRule"/>
</dbReference>
<dbReference type="GO" id="GO:0006434">
    <property type="term" value="P:seryl-tRNA aminoacylation"/>
    <property type="evidence" value="ECO:0007669"/>
    <property type="project" value="UniProtKB-UniRule"/>
</dbReference>
<dbReference type="CDD" id="cd00770">
    <property type="entry name" value="SerRS_core"/>
    <property type="match status" value="1"/>
</dbReference>
<dbReference type="Gene3D" id="3.30.930.10">
    <property type="entry name" value="Bira Bifunctional Protein, Domain 2"/>
    <property type="match status" value="1"/>
</dbReference>
<dbReference type="Gene3D" id="1.10.287.40">
    <property type="entry name" value="Serine-tRNA synthetase, tRNA binding domain"/>
    <property type="match status" value="1"/>
</dbReference>
<dbReference type="HAMAP" id="MF_00176">
    <property type="entry name" value="Ser_tRNA_synth_type1"/>
    <property type="match status" value="1"/>
</dbReference>
<dbReference type="InterPro" id="IPR002314">
    <property type="entry name" value="aa-tRNA-synt_IIb"/>
</dbReference>
<dbReference type="InterPro" id="IPR006195">
    <property type="entry name" value="aa-tRNA-synth_II"/>
</dbReference>
<dbReference type="InterPro" id="IPR045864">
    <property type="entry name" value="aa-tRNA-synth_II/BPL/LPL"/>
</dbReference>
<dbReference type="InterPro" id="IPR002317">
    <property type="entry name" value="Ser-tRNA-ligase_type_1"/>
</dbReference>
<dbReference type="InterPro" id="IPR015866">
    <property type="entry name" value="Ser-tRNA-synth_1_N"/>
</dbReference>
<dbReference type="InterPro" id="IPR042103">
    <property type="entry name" value="SerRS_1_N_sf"/>
</dbReference>
<dbReference type="InterPro" id="IPR033729">
    <property type="entry name" value="SerRS_core"/>
</dbReference>
<dbReference type="InterPro" id="IPR010978">
    <property type="entry name" value="tRNA-bd_arm"/>
</dbReference>
<dbReference type="NCBIfam" id="TIGR00414">
    <property type="entry name" value="serS"/>
    <property type="match status" value="1"/>
</dbReference>
<dbReference type="PANTHER" id="PTHR43697:SF1">
    <property type="entry name" value="SERINE--TRNA LIGASE"/>
    <property type="match status" value="1"/>
</dbReference>
<dbReference type="PANTHER" id="PTHR43697">
    <property type="entry name" value="SERYL-TRNA SYNTHETASE"/>
    <property type="match status" value="1"/>
</dbReference>
<dbReference type="Pfam" id="PF02403">
    <property type="entry name" value="Seryl_tRNA_N"/>
    <property type="match status" value="1"/>
</dbReference>
<dbReference type="Pfam" id="PF00587">
    <property type="entry name" value="tRNA-synt_2b"/>
    <property type="match status" value="1"/>
</dbReference>
<dbReference type="PIRSF" id="PIRSF001529">
    <property type="entry name" value="Ser-tRNA-synth_IIa"/>
    <property type="match status" value="1"/>
</dbReference>
<dbReference type="PRINTS" id="PR00981">
    <property type="entry name" value="TRNASYNTHSER"/>
</dbReference>
<dbReference type="SUPFAM" id="SSF55681">
    <property type="entry name" value="Class II aaRS and biotin synthetases"/>
    <property type="match status" value="1"/>
</dbReference>
<dbReference type="SUPFAM" id="SSF46589">
    <property type="entry name" value="tRNA-binding arm"/>
    <property type="match status" value="1"/>
</dbReference>
<dbReference type="PROSITE" id="PS50862">
    <property type="entry name" value="AA_TRNA_LIGASE_II"/>
    <property type="match status" value="1"/>
</dbReference>
<organism>
    <name type="scientific">Xanthobacter autotrophicus (strain ATCC BAA-1158 / Py2)</name>
    <dbReference type="NCBI Taxonomy" id="78245"/>
    <lineage>
        <taxon>Bacteria</taxon>
        <taxon>Pseudomonadati</taxon>
        <taxon>Pseudomonadota</taxon>
        <taxon>Alphaproteobacteria</taxon>
        <taxon>Hyphomicrobiales</taxon>
        <taxon>Xanthobacteraceae</taxon>
        <taxon>Xanthobacter</taxon>
    </lineage>
</organism>